<protein>
    <recommendedName>
        <fullName>Diacylglycerol acyltransferase/mycolyltransferase Ag85B</fullName>
        <shortName>DGAT</shortName>
        <ecNumber>2.3.1.122</ecNumber>
        <ecNumber>2.3.1.20</ecNumber>
    </recommendedName>
    <alternativeName>
        <fullName>30 kDa extracellular protein</fullName>
    </alternativeName>
    <alternativeName>
        <fullName>Acyl-CoA:diacylglycerol acyltransferase</fullName>
    </alternativeName>
    <alternativeName>
        <fullName>Antigen 85 complex B</fullName>
        <shortName>85B</shortName>
        <shortName>Ag85B</shortName>
    </alternativeName>
    <alternativeName>
        <fullName>Extracellular alpha-antigen</fullName>
    </alternativeName>
    <alternativeName>
        <fullName>Fibronectin-binding protein B</fullName>
        <shortName>Fbps B</shortName>
    </alternativeName>
</protein>
<name>A85B_MYCKA</name>
<dbReference type="EC" id="2.3.1.122"/>
<dbReference type="EC" id="2.3.1.20"/>
<dbReference type="EMBL" id="X53897">
    <property type="protein sequence ID" value="CAA37868.1"/>
    <property type="molecule type" value="Genomic_DNA"/>
</dbReference>
<dbReference type="PIR" id="A37185">
    <property type="entry name" value="A37185"/>
</dbReference>
<dbReference type="RefSeq" id="WP_023364215.1">
    <property type="nucleotide sequence ID" value="NZ_UPHJ01000063.1"/>
</dbReference>
<dbReference type="SMR" id="P21160"/>
<dbReference type="STRING" id="1768.B1T50_00710"/>
<dbReference type="ESTHER" id="mycka-a85b">
    <property type="family name" value="A85-Mycolyl-transferase"/>
</dbReference>
<dbReference type="GeneID" id="29700744"/>
<dbReference type="GO" id="GO:0005576">
    <property type="term" value="C:extracellular region"/>
    <property type="evidence" value="ECO:0007669"/>
    <property type="project" value="UniProtKB-SubCell"/>
</dbReference>
<dbReference type="GO" id="GO:0004144">
    <property type="term" value="F:diacylglycerol O-acyltransferase activity"/>
    <property type="evidence" value="ECO:0007669"/>
    <property type="project" value="UniProtKB-EC"/>
</dbReference>
<dbReference type="GO" id="GO:0050348">
    <property type="term" value="F:trehalose O-mycolyltransferase activity"/>
    <property type="evidence" value="ECO:0007669"/>
    <property type="project" value="UniProtKB-EC"/>
</dbReference>
<dbReference type="FunFam" id="3.40.50.1820:FF:000086">
    <property type="entry name" value="Diacylglycerol acyltransferase/mycolyltransferase Ag85C"/>
    <property type="match status" value="1"/>
</dbReference>
<dbReference type="Gene3D" id="3.40.50.1820">
    <property type="entry name" value="alpha/beta hydrolase"/>
    <property type="match status" value="1"/>
</dbReference>
<dbReference type="InterPro" id="IPR029058">
    <property type="entry name" value="AB_hydrolase_fold"/>
</dbReference>
<dbReference type="InterPro" id="IPR000801">
    <property type="entry name" value="Esterase-like"/>
</dbReference>
<dbReference type="InterPro" id="IPR050583">
    <property type="entry name" value="Mycobacterial_A85_antigen"/>
</dbReference>
<dbReference type="PANTHER" id="PTHR48098:SF1">
    <property type="entry name" value="DIACYLGLYCEROL ACYLTRANSFERASE_MYCOLYLTRANSFERASE AG85A"/>
    <property type="match status" value="1"/>
</dbReference>
<dbReference type="PANTHER" id="PTHR48098">
    <property type="entry name" value="ENTEROCHELIN ESTERASE-RELATED"/>
    <property type="match status" value="1"/>
</dbReference>
<dbReference type="Pfam" id="PF00756">
    <property type="entry name" value="Esterase"/>
    <property type="match status" value="1"/>
</dbReference>
<dbReference type="SUPFAM" id="SSF53474">
    <property type="entry name" value="alpha/beta-Hydrolases"/>
    <property type="match status" value="1"/>
</dbReference>
<feature type="signal peptide">
    <location>
        <begin position="1"/>
        <end position="40"/>
    </location>
</feature>
<feature type="chain" id="PRO_0000000219" description="Diacylglycerol acyltransferase/mycolyltransferase Ag85B">
    <location>
        <begin position="41"/>
        <end position="325"/>
    </location>
</feature>
<feature type="region of interest" description="Fibronectin-binding">
    <location>
        <begin position="98"/>
        <end position="108"/>
    </location>
</feature>
<feature type="active site" description="Nucleophile" evidence="1">
    <location>
        <position position="166"/>
    </location>
</feature>
<feature type="active site" evidence="1">
    <location>
        <position position="270"/>
    </location>
</feature>
<feature type="active site" evidence="1">
    <location>
        <position position="302"/>
    </location>
</feature>
<feature type="binding site" evidence="1">
    <location>
        <begin position="82"/>
        <end position="83"/>
    </location>
    <ligand>
        <name>substrate</name>
    </ligand>
</feature>
<feature type="binding site" evidence="1">
    <location>
        <position position="166"/>
    </location>
    <ligand>
        <name>substrate</name>
    </ligand>
</feature>
<feature type="binding site" evidence="1">
    <location>
        <position position="194"/>
    </location>
    <ligand>
        <name>substrate</name>
    </ligand>
</feature>
<feature type="binding site" evidence="1">
    <location>
        <begin position="272"/>
        <end position="275"/>
    </location>
    <ligand>
        <name>substrate</name>
    </ligand>
</feature>
<feature type="binding site" evidence="1">
    <location>
        <position position="279"/>
    </location>
    <ligand>
        <name>substrate</name>
    </ligand>
</feature>
<feature type="binding site" evidence="1">
    <location>
        <begin position="302"/>
        <end position="304"/>
    </location>
    <ligand>
        <name>substrate</name>
    </ligand>
</feature>
<feature type="disulfide bond" evidence="1">
    <location>
        <begin position="127"/>
        <end position="132"/>
    </location>
</feature>
<gene>
    <name type="primary">fbpB</name>
</gene>
<sequence>MTDVSGKIRAWGRRLLVGAAAAAALPGLVGLAGGAATAGAFSRPGLPVEYLQVPSAAMGRSIKVQFQSGGDNSPAVYLLDGLRAQDDYNGWDINTPAFEWYYQSGLSVIMPVGGQSSFYSDWYSPACGKAGCTTYKWETFLTSELPQWLSANRSVKPTGSAAVGISMAGSSALILSVYHPQQFIYAGSLSALMDPSQGMGPSLIGLAMGDAGGYKASDMWGPSSDPAWQRNDPSLHIPELVANNTRLWIYCGNGTPSELGGANVPAEFLENFVRSSNLKFQDAYNAAGGHNAVFNLDANGTHSWEYWGAQLNAMKGDLQASLGAR</sequence>
<keyword id="KW-0012">Acyltransferase</keyword>
<keyword id="KW-1015">Disulfide bond</keyword>
<keyword id="KW-0964">Secreted</keyword>
<keyword id="KW-0732">Signal</keyword>
<keyword id="KW-0808">Transferase</keyword>
<proteinExistence type="evidence at protein level"/>
<accession>P21160</accession>
<reference key="1">
    <citation type="journal article" date="1990" name="Infect. Immun.">
        <title>Cloning and expression of the gene for the cross-reactive alpha antigen of Mycobacterium kansasii.</title>
        <authorList>
            <person name="Matsuo K."/>
            <person name="Yamaguchi R."/>
            <person name="Yamazaki A."/>
            <person name="Tasaka H."/>
            <person name="Terasaka K."/>
            <person name="Yamada T."/>
        </authorList>
    </citation>
    <scope>NUCLEOTIDE SEQUENCE [GENOMIC DNA]</scope>
</reference>
<reference key="2">
    <citation type="journal article" date="1998" name="J. Biol. Chem.">
        <title>The novel fibronectin-binding motif and key residues of mycobacteria.</title>
        <authorList>
            <person name="Naito M."/>
            <person name="Ohara N."/>
            <person name="Matsumoto S."/>
            <person name="Yamada T."/>
        </authorList>
    </citation>
    <scope>DOMAIN FIBRONECTIN BINDING</scope>
</reference>
<organism>
    <name type="scientific">Mycobacterium kansasii</name>
    <dbReference type="NCBI Taxonomy" id="1768"/>
    <lineage>
        <taxon>Bacteria</taxon>
        <taxon>Bacillati</taxon>
        <taxon>Actinomycetota</taxon>
        <taxon>Actinomycetes</taxon>
        <taxon>Mycobacteriales</taxon>
        <taxon>Mycobacteriaceae</taxon>
        <taxon>Mycobacterium</taxon>
    </lineage>
</organism>
<evidence type="ECO:0000250" key="1"/>
<evidence type="ECO:0000305" key="2"/>
<comment type="function">
    <text evidence="1">The antigen 85 proteins (FbpA, FbpB, FbpC) are responsible for the high affinity of mycobacteria for fibronectin, a large adhesive glycoprotein, which facilitates the attachment of M.tuberculosis to murine alveolar macrophages (AMs). They also help to maintain the integrity of the cell wall by catalyzing the transfer of mycolic acids to cell wall arabinogalactan and through the synthesis of alpha,alpha-trehalose dimycolate (TDM, cord factor). They catalyze the transfer of a mycoloyl residue from one molecule of alpha,alpha-trehalose monomycolate (TMM) to another TMM, leading to the formation of TDM (By similarity).</text>
</comment>
<comment type="catalytic activity">
    <reaction>
        <text>2 alpha,alpha'-trehalose 6-mycolate = alpha,alpha'-trehalose 6,6'-bismycolate + alpha,alpha-trehalose</text>
        <dbReference type="Rhea" id="RHEA:23472"/>
        <dbReference type="ChEBI" id="CHEBI:16551"/>
        <dbReference type="ChEBI" id="CHEBI:18195"/>
        <dbReference type="ChEBI" id="CHEBI:18234"/>
        <dbReference type="EC" id="2.3.1.122"/>
    </reaction>
</comment>
<comment type="catalytic activity">
    <reaction>
        <text>an acyl-CoA + a 1,2-diacyl-sn-glycerol = a triacyl-sn-glycerol + CoA</text>
        <dbReference type="Rhea" id="RHEA:10868"/>
        <dbReference type="ChEBI" id="CHEBI:17815"/>
        <dbReference type="ChEBI" id="CHEBI:57287"/>
        <dbReference type="ChEBI" id="CHEBI:58342"/>
        <dbReference type="ChEBI" id="CHEBI:64615"/>
        <dbReference type="EC" id="2.3.1.20"/>
    </reaction>
</comment>
<comment type="subcellular location">
    <subcellularLocation>
        <location evidence="1">Secreted</location>
    </subcellularLocation>
</comment>
<comment type="similarity">
    <text evidence="2">Belongs to the mycobacterial A85 antigen family.</text>
</comment>